<feature type="chain" id="PRO_0000411574" description="Cell division protein SepF">
    <location>
        <begin position="1"/>
        <end position="218"/>
    </location>
</feature>
<feature type="region of interest" description="Disordered" evidence="2">
    <location>
        <begin position="25"/>
        <end position="115"/>
    </location>
</feature>
<feature type="compositionally biased region" description="Polar residues" evidence="2">
    <location>
        <begin position="29"/>
        <end position="43"/>
    </location>
</feature>
<feature type="compositionally biased region" description="Basic and acidic residues" evidence="2">
    <location>
        <begin position="47"/>
        <end position="63"/>
    </location>
</feature>
<evidence type="ECO:0000255" key="1">
    <source>
        <dbReference type="HAMAP-Rule" id="MF_01197"/>
    </source>
</evidence>
<evidence type="ECO:0000256" key="2">
    <source>
        <dbReference type="SAM" id="MobiDB-lite"/>
    </source>
</evidence>
<evidence type="ECO:0000305" key="3"/>
<dbReference type="EMBL" id="BA000034">
    <property type="protein sequence ID" value="BAC63787.1"/>
    <property type="status" value="ALT_INIT"/>
    <property type="molecule type" value="Genomic_DNA"/>
</dbReference>
<dbReference type="RefSeq" id="WP_011018004.1">
    <property type="nucleotide sequence ID" value="NC_004606.1"/>
</dbReference>
<dbReference type="SMR" id="P0DF69"/>
<dbReference type="KEGG" id="sps:SPs0692"/>
<dbReference type="HOGENOM" id="CLU_078499_2_0_9"/>
<dbReference type="GO" id="GO:0005737">
    <property type="term" value="C:cytoplasm"/>
    <property type="evidence" value="ECO:0007669"/>
    <property type="project" value="UniProtKB-SubCell"/>
</dbReference>
<dbReference type="GO" id="GO:0000917">
    <property type="term" value="P:division septum assembly"/>
    <property type="evidence" value="ECO:0007669"/>
    <property type="project" value="UniProtKB-KW"/>
</dbReference>
<dbReference type="GO" id="GO:0043093">
    <property type="term" value="P:FtsZ-dependent cytokinesis"/>
    <property type="evidence" value="ECO:0007669"/>
    <property type="project" value="UniProtKB-UniRule"/>
</dbReference>
<dbReference type="Gene3D" id="3.30.110.150">
    <property type="entry name" value="SepF-like protein"/>
    <property type="match status" value="1"/>
</dbReference>
<dbReference type="HAMAP" id="MF_01197">
    <property type="entry name" value="SepF"/>
    <property type="match status" value="1"/>
</dbReference>
<dbReference type="InterPro" id="IPR023052">
    <property type="entry name" value="Cell_div_SepF"/>
</dbReference>
<dbReference type="InterPro" id="IPR007561">
    <property type="entry name" value="Cell_div_SepF/SepF-rel"/>
</dbReference>
<dbReference type="InterPro" id="IPR038594">
    <property type="entry name" value="SepF-like_sf"/>
</dbReference>
<dbReference type="PANTHER" id="PTHR35798">
    <property type="entry name" value="CELL DIVISION PROTEIN SEPF"/>
    <property type="match status" value="1"/>
</dbReference>
<dbReference type="PANTHER" id="PTHR35798:SF1">
    <property type="entry name" value="CELL DIVISION PROTEIN SEPF"/>
    <property type="match status" value="1"/>
</dbReference>
<dbReference type="Pfam" id="PF04472">
    <property type="entry name" value="SepF"/>
    <property type="match status" value="1"/>
</dbReference>
<name>SEPF_STRPQ</name>
<comment type="function">
    <text evidence="1">Cell division protein that is part of the divisome complex and is recruited early to the Z-ring. Probably stimulates Z-ring formation, perhaps through the cross-linking of FtsZ protofilaments. Its function overlaps with FtsA.</text>
</comment>
<comment type="subunit">
    <text evidence="1">Homodimer. Interacts with FtsZ.</text>
</comment>
<comment type="subcellular location">
    <subcellularLocation>
        <location evidence="1">Cytoplasm</location>
    </subcellularLocation>
    <text evidence="1">Localizes to the division site, in a FtsZ-dependent manner.</text>
</comment>
<comment type="similarity">
    <text evidence="1">Belongs to the SepF family.</text>
</comment>
<comment type="sequence caution" evidence="3">
    <conflict type="erroneous initiation">
        <sequence resource="EMBL-CDS" id="BAC63787"/>
    </conflict>
</comment>
<reference key="1">
    <citation type="journal article" date="2003" name="Genome Res.">
        <title>Genome sequence of an M3 strain of Streptococcus pyogenes reveals a large-scale genomic rearrangement in invasive strains and new insights into phage evolution.</title>
        <authorList>
            <person name="Nakagawa I."/>
            <person name="Kurokawa K."/>
            <person name="Yamashita A."/>
            <person name="Nakata M."/>
            <person name="Tomiyasu Y."/>
            <person name="Okahashi N."/>
            <person name="Kawabata S."/>
            <person name="Yamazaki K."/>
            <person name="Shiba T."/>
            <person name="Yasunaga T."/>
            <person name="Hayashi H."/>
            <person name="Hattori M."/>
            <person name="Hamada S."/>
        </authorList>
    </citation>
    <scope>NUCLEOTIDE SEQUENCE [LARGE SCALE GENOMIC DNA]</scope>
    <source>
        <strain>SSI-1</strain>
    </source>
</reference>
<keyword id="KW-0131">Cell cycle</keyword>
<keyword id="KW-0132">Cell division</keyword>
<keyword id="KW-0963">Cytoplasm</keyword>
<keyword id="KW-0717">Septation</keyword>
<organism>
    <name type="scientific">Streptococcus pyogenes serotype M3 (strain SSI-1)</name>
    <dbReference type="NCBI Taxonomy" id="193567"/>
    <lineage>
        <taxon>Bacteria</taxon>
        <taxon>Bacillati</taxon>
        <taxon>Bacillota</taxon>
        <taxon>Bacilli</taxon>
        <taxon>Lactobacillales</taxon>
        <taxon>Streptococcaceae</taxon>
        <taxon>Streptococcus</taxon>
    </lineage>
</organism>
<proteinExistence type="inferred from homology"/>
<protein>
    <recommendedName>
        <fullName evidence="1">Cell division protein SepF</fullName>
    </recommendedName>
</protein>
<gene>
    <name evidence="1" type="primary">sepF</name>
    <name type="ordered locus">SPs0692</name>
</gene>
<accession>P0DF69</accession>
<accession>Q7CEY2</accession>
<accession>Q879A0</accession>
<sequence>MAFKDTFNKMISYFDTDEVNEVEEDVAASTDNVIPRSQQSVRASSHPKQEPRNNHVQQDHQARSQEQTRSQMHPKHGTSERYYQQSQPKEGHEMVDRRKRMSTSGIANRREQYQQSTCSDQTTIALKYPRKYEDAQEIVDLLIVNECVLIDFQFMLDAQARRCLDFIDGASKVLYGSLQKVGSSMYLLAPSNVSVNIEEMTIPHTTQDIGFDFDMKRR</sequence>